<evidence type="ECO:0000255" key="1">
    <source>
        <dbReference type="HAMAP-Rule" id="MF_01821"/>
    </source>
</evidence>
<organism>
    <name type="scientific">Escherichia coli O81 (strain ED1a)</name>
    <dbReference type="NCBI Taxonomy" id="585397"/>
    <lineage>
        <taxon>Bacteria</taxon>
        <taxon>Pseudomonadati</taxon>
        <taxon>Pseudomonadota</taxon>
        <taxon>Gammaproteobacteria</taxon>
        <taxon>Enterobacterales</taxon>
        <taxon>Enterobacteriaceae</taxon>
        <taxon>Escherichia</taxon>
    </lineage>
</organism>
<proteinExistence type="inferred from homology"/>
<keyword id="KW-0010">Activator</keyword>
<keyword id="KW-0067">ATP-binding</keyword>
<keyword id="KW-0238">DNA-binding</keyword>
<keyword id="KW-0347">Helicase</keyword>
<keyword id="KW-0378">Hydrolase</keyword>
<keyword id="KW-0547">Nucleotide-binding</keyword>
<keyword id="KW-0804">Transcription</keyword>
<keyword id="KW-0805">Transcription regulation</keyword>
<feature type="chain" id="PRO_1000188172" description="RNA polymerase-associated protein RapA">
    <location>
        <begin position="1"/>
        <end position="968"/>
    </location>
</feature>
<feature type="domain" description="Helicase ATP-binding" evidence="1">
    <location>
        <begin position="164"/>
        <end position="334"/>
    </location>
</feature>
<feature type="domain" description="Helicase C-terminal" evidence="1">
    <location>
        <begin position="490"/>
        <end position="662"/>
    </location>
</feature>
<feature type="short sequence motif" description="DEAH box">
    <location>
        <begin position="280"/>
        <end position="283"/>
    </location>
</feature>
<feature type="binding site" evidence="1">
    <location>
        <begin position="177"/>
        <end position="184"/>
    </location>
    <ligand>
        <name>ATP</name>
        <dbReference type="ChEBI" id="CHEBI:30616"/>
    </ligand>
</feature>
<gene>
    <name evidence="1" type="primary">rapA</name>
    <name type="ordered locus">ECED1_0058</name>
</gene>
<reference key="1">
    <citation type="journal article" date="2009" name="PLoS Genet.">
        <title>Organised genome dynamics in the Escherichia coli species results in highly diverse adaptive paths.</title>
        <authorList>
            <person name="Touchon M."/>
            <person name="Hoede C."/>
            <person name="Tenaillon O."/>
            <person name="Barbe V."/>
            <person name="Baeriswyl S."/>
            <person name="Bidet P."/>
            <person name="Bingen E."/>
            <person name="Bonacorsi S."/>
            <person name="Bouchier C."/>
            <person name="Bouvet O."/>
            <person name="Calteau A."/>
            <person name="Chiapello H."/>
            <person name="Clermont O."/>
            <person name="Cruveiller S."/>
            <person name="Danchin A."/>
            <person name="Diard M."/>
            <person name="Dossat C."/>
            <person name="Karoui M.E."/>
            <person name="Frapy E."/>
            <person name="Garry L."/>
            <person name="Ghigo J.M."/>
            <person name="Gilles A.M."/>
            <person name="Johnson J."/>
            <person name="Le Bouguenec C."/>
            <person name="Lescat M."/>
            <person name="Mangenot S."/>
            <person name="Martinez-Jehanne V."/>
            <person name="Matic I."/>
            <person name="Nassif X."/>
            <person name="Oztas S."/>
            <person name="Petit M.A."/>
            <person name="Pichon C."/>
            <person name="Rouy Z."/>
            <person name="Ruf C.S."/>
            <person name="Schneider D."/>
            <person name="Tourret J."/>
            <person name="Vacherie B."/>
            <person name="Vallenet D."/>
            <person name="Medigue C."/>
            <person name="Rocha E.P.C."/>
            <person name="Denamur E."/>
        </authorList>
    </citation>
    <scope>NUCLEOTIDE SEQUENCE [LARGE SCALE GENOMIC DNA]</scope>
    <source>
        <strain>ED1a</strain>
    </source>
</reference>
<comment type="function">
    <text evidence="1">Transcription regulator that activates transcription by stimulating RNA polymerase (RNAP) recycling in case of stress conditions such as supercoiled DNA or high salt concentrations. Probably acts by releasing the RNAP, when it is trapped or immobilized on tightly supercoiled DNA. Does not activate transcription on linear DNA. Probably not involved in DNA repair.</text>
</comment>
<comment type="subunit">
    <text evidence="1">Interacts with the RNAP. Has a higher affinity for the core RNAP than for the holoenzyme. Its ATPase activity is stimulated by binding to RNAP.</text>
</comment>
<comment type="similarity">
    <text evidence="1">Belongs to the SNF2/RAD54 helicase family. RapA subfamily.</text>
</comment>
<sequence length="968" mass="109748">MPFTLGQRWISDTESELGLGAVVAVDARTVTLLFPSTGENRLYARSDSPVTRVMFNPGDTITSHDGWQMQVEEVKEENGLLTYIGTRLDTEESGVALREVFLDSKLVFSKPQDRLFAGQIDRMDRFALRYRARKYSSEQFRMPYSGLRGQRTSLIPHQLNIAHDVGRRHAPRVLLADEVGLGKTIEAGMILHQQLLSGAAERVLIIVPETLQHQWLVEMLRRFNLRFALFDDERYAEAQHDAYNPFDTEQLVICSLDFARRSKQRLEHLCEAEWDLLVVDEAHHLVWSEDAPSREYQAIEQLAEHVPGVLLLTATPEQLGMESHFARLRLLDPNRFHDFAQFVEEQKNYRPVADAVAMLLAGNKLSNDELNMLGEMIGEQDIEPLLQAANSDSEDAQSARQELVSMLMDRHGTSRVLFRNTRNGVKGFPKRELHTIKLPLPTQYQTAIKVSGIMGARKSAEDRARDMLYPERIYQEFEGDNATWWNFDPRVEWLMGYLTSHRSQKVLVICAKAATALQLEQVLREREGIRAAVFHEGMSIIERDRAAAWFAEEDTGAQVLLCSEIGSEGRNFQFASHMVMFDLPFNPDLLEQRIGRLDRIGQAHDIQIHVPYLEKTAQSVLVRWYHEGLDAFEHTCPTGRTIYDSVYNDLINYLASPDETEGFDDLIKNCREQHEALKAQLEQGRDRLLEIHSNGGEKAQALAESIEEQDDDTNLIAFAMNLFDIIGINQDDRGDNIIVLTPSDHMLVPDFPGLSEDGITITFDREVALAREDAQFITWEHPLIRNGLDLILSGDTGSSTISLLKNKALPVGTLLVELIYVVEAQAPKQLQLNRFLPPTPVRMLLDKNGNNLAAQVEFETFNRQLNAVNRYTGSKLVNAVQQDVHAILQLGEAQIEKSARALIDAARNEADEKLSAELSRLEALRAVNPNIRDDELTAIESNRQQVMESLDQAGWRLDALRLIVVTHQ</sequence>
<protein>
    <recommendedName>
        <fullName evidence="1">RNA polymerase-associated protein RapA</fullName>
        <ecNumber evidence="1">3.6.4.-</ecNumber>
    </recommendedName>
    <alternativeName>
        <fullName evidence="1">ATP-dependent helicase HepA</fullName>
    </alternativeName>
</protein>
<dbReference type="EC" id="3.6.4.-" evidence="1"/>
<dbReference type="EMBL" id="CU928162">
    <property type="protein sequence ID" value="CAR06281.1"/>
    <property type="molecule type" value="Genomic_DNA"/>
</dbReference>
<dbReference type="RefSeq" id="WP_001116957.1">
    <property type="nucleotide sequence ID" value="NC_011745.1"/>
</dbReference>
<dbReference type="SMR" id="B7MNR6"/>
<dbReference type="KEGG" id="ecq:ECED1_0058"/>
<dbReference type="HOGENOM" id="CLU_011520_0_0_6"/>
<dbReference type="Proteomes" id="UP000000748">
    <property type="component" value="Chromosome"/>
</dbReference>
<dbReference type="GO" id="GO:0005524">
    <property type="term" value="F:ATP binding"/>
    <property type="evidence" value="ECO:0007669"/>
    <property type="project" value="UniProtKB-UniRule"/>
</dbReference>
<dbReference type="GO" id="GO:0003677">
    <property type="term" value="F:DNA binding"/>
    <property type="evidence" value="ECO:0007669"/>
    <property type="project" value="UniProtKB-KW"/>
</dbReference>
<dbReference type="GO" id="GO:0004386">
    <property type="term" value="F:helicase activity"/>
    <property type="evidence" value="ECO:0007669"/>
    <property type="project" value="UniProtKB-UniRule"/>
</dbReference>
<dbReference type="GO" id="GO:0016817">
    <property type="term" value="F:hydrolase activity, acting on acid anhydrides"/>
    <property type="evidence" value="ECO:0007669"/>
    <property type="project" value="InterPro"/>
</dbReference>
<dbReference type="GO" id="GO:0006355">
    <property type="term" value="P:regulation of DNA-templated transcription"/>
    <property type="evidence" value="ECO:0007669"/>
    <property type="project" value="UniProtKB-UniRule"/>
</dbReference>
<dbReference type="CDD" id="cd18011">
    <property type="entry name" value="DEXDc_RapA"/>
    <property type="match status" value="1"/>
</dbReference>
<dbReference type="CDD" id="cd18793">
    <property type="entry name" value="SF2_C_SNF"/>
    <property type="match status" value="1"/>
</dbReference>
<dbReference type="FunFam" id="2.30.30.140:FF:000020">
    <property type="entry name" value="RNA polymerase-associated protein RapA"/>
    <property type="match status" value="1"/>
</dbReference>
<dbReference type="FunFam" id="2.30.30.930:FF:000001">
    <property type="entry name" value="RNA polymerase-associated protein RapA"/>
    <property type="match status" value="1"/>
</dbReference>
<dbReference type="FunFam" id="3.30.360.80:FF:000001">
    <property type="entry name" value="RNA polymerase-associated protein RapA"/>
    <property type="match status" value="1"/>
</dbReference>
<dbReference type="FunFam" id="3.40.50.10810:FF:000012">
    <property type="entry name" value="RNA polymerase-associated protein RapA"/>
    <property type="match status" value="1"/>
</dbReference>
<dbReference type="FunFam" id="3.40.50.300:FF:000350">
    <property type="entry name" value="RNA polymerase-associated protein RapA"/>
    <property type="match status" value="1"/>
</dbReference>
<dbReference type="Gene3D" id="2.30.30.140">
    <property type="match status" value="1"/>
</dbReference>
<dbReference type="Gene3D" id="2.30.30.930">
    <property type="match status" value="1"/>
</dbReference>
<dbReference type="Gene3D" id="3.30.360.80">
    <property type="match status" value="1"/>
</dbReference>
<dbReference type="Gene3D" id="6.10.140.1500">
    <property type="match status" value="1"/>
</dbReference>
<dbReference type="Gene3D" id="6.10.140.2230">
    <property type="match status" value="1"/>
</dbReference>
<dbReference type="Gene3D" id="3.40.50.300">
    <property type="entry name" value="P-loop containing nucleotide triphosphate hydrolases"/>
    <property type="match status" value="1"/>
</dbReference>
<dbReference type="Gene3D" id="3.40.50.10810">
    <property type="entry name" value="Tandem AAA-ATPase domain"/>
    <property type="match status" value="1"/>
</dbReference>
<dbReference type="HAMAP" id="MF_01821">
    <property type="entry name" value="Helicase_RapA"/>
    <property type="match status" value="1"/>
</dbReference>
<dbReference type="InterPro" id="IPR014001">
    <property type="entry name" value="Helicase_ATP-bd"/>
</dbReference>
<dbReference type="InterPro" id="IPR001650">
    <property type="entry name" value="Helicase_C-like"/>
</dbReference>
<dbReference type="InterPro" id="IPR023949">
    <property type="entry name" value="Helicase_RapA"/>
</dbReference>
<dbReference type="InterPro" id="IPR027417">
    <property type="entry name" value="P-loop_NTPase"/>
</dbReference>
<dbReference type="InterPro" id="IPR022737">
    <property type="entry name" value="RapA_C"/>
</dbReference>
<dbReference type="InterPro" id="IPR038718">
    <property type="entry name" value="SNF2-like_sf"/>
</dbReference>
<dbReference type="InterPro" id="IPR049730">
    <property type="entry name" value="SNF2/RAD54-like_C"/>
</dbReference>
<dbReference type="InterPro" id="IPR000330">
    <property type="entry name" value="SNF2_N"/>
</dbReference>
<dbReference type="InterPro" id="IPR040765">
    <property type="entry name" value="Tudor_1_RapA"/>
</dbReference>
<dbReference type="InterPro" id="IPR040766">
    <property type="entry name" value="Tudor_2_RapA"/>
</dbReference>
<dbReference type="NCBIfam" id="NF003426">
    <property type="entry name" value="PRK04914.1"/>
    <property type="match status" value="1"/>
</dbReference>
<dbReference type="PANTHER" id="PTHR45766">
    <property type="entry name" value="DNA ANNEALING HELICASE AND ENDONUCLEASE ZRANB3 FAMILY MEMBER"/>
    <property type="match status" value="1"/>
</dbReference>
<dbReference type="PANTHER" id="PTHR45766:SF6">
    <property type="entry name" value="SWI_SNF-RELATED MATRIX-ASSOCIATED ACTIN-DEPENDENT REGULATOR OF CHROMATIN SUBFAMILY A-LIKE PROTEIN 1"/>
    <property type="match status" value="1"/>
</dbReference>
<dbReference type="Pfam" id="PF00271">
    <property type="entry name" value="Helicase_C"/>
    <property type="match status" value="1"/>
</dbReference>
<dbReference type="Pfam" id="PF12137">
    <property type="entry name" value="RapA_C"/>
    <property type="match status" value="1"/>
</dbReference>
<dbReference type="Pfam" id="PF00176">
    <property type="entry name" value="SNF2-rel_dom"/>
    <property type="match status" value="1"/>
</dbReference>
<dbReference type="Pfam" id="PF18339">
    <property type="entry name" value="Tudor_1_RapA"/>
    <property type="match status" value="1"/>
</dbReference>
<dbReference type="Pfam" id="PF18337">
    <property type="entry name" value="Tudor_RapA"/>
    <property type="match status" value="1"/>
</dbReference>
<dbReference type="SMART" id="SM00487">
    <property type="entry name" value="DEXDc"/>
    <property type="match status" value="1"/>
</dbReference>
<dbReference type="SMART" id="SM00490">
    <property type="entry name" value="HELICc"/>
    <property type="match status" value="1"/>
</dbReference>
<dbReference type="SUPFAM" id="SSF52540">
    <property type="entry name" value="P-loop containing nucleoside triphosphate hydrolases"/>
    <property type="match status" value="2"/>
</dbReference>
<dbReference type="PROSITE" id="PS51192">
    <property type="entry name" value="HELICASE_ATP_BIND_1"/>
    <property type="match status" value="1"/>
</dbReference>
<dbReference type="PROSITE" id="PS51194">
    <property type="entry name" value="HELICASE_CTER"/>
    <property type="match status" value="1"/>
</dbReference>
<name>RAPA_ECO81</name>
<accession>B7MNR6</accession>